<name>PYR3_ASPFU</name>
<accession>A4D9R2</accession>
<gene>
    <name evidence="7" type="primary">pyr3</name>
    <name type="ORF">AFUA_6G13940</name>
</gene>
<protein>
    <recommendedName>
        <fullName evidence="7">Cytochrome P450 monooxygenase pyr3</fullName>
        <ecNumber evidence="9">1.-.-.-</ecNumber>
    </recommendedName>
    <alternativeName>
        <fullName evidence="7">Pyripyropene synthesis protein 3</fullName>
    </alternativeName>
</protein>
<evidence type="ECO:0000250" key="1">
    <source>
        <dbReference type="UniProtKB" id="P04798"/>
    </source>
</evidence>
<evidence type="ECO:0000255" key="2"/>
<evidence type="ECO:0000269" key="3">
    <source>
    </source>
</evidence>
<evidence type="ECO:0000269" key="4">
    <source>
    </source>
</evidence>
<evidence type="ECO:0000269" key="5">
    <source>
    </source>
</evidence>
<evidence type="ECO:0000269" key="6">
    <source>
    </source>
</evidence>
<evidence type="ECO:0000303" key="7">
    <source>
    </source>
</evidence>
<evidence type="ECO:0000305" key="8"/>
<evidence type="ECO:0000305" key="9">
    <source>
    </source>
</evidence>
<evidence type="ECO:0000305" key="10">
    <source>
    </source>
</evidence>
<evidence type="ECO:0000305" key="11">
    <source>
    </source>
</evidence>
<dbReference type="EC" id="1.-.-.-" evidence="9"/>
<dbReference type="EMBL" id="AAHF01000006">
    <property type="protein sequence ID" value="EBA27371.1"/>
    <property type="molecule type" value="Genomic_DNA"/>
</dbReference>
<dbReference type="RefSeq" id="XP_001481476.1">
    <property type="nucleotide sequence ID" value="XM_001481426.1"/>
</dbReference>
<dbReference type="SMR" id="A4D9R2"/>
<dbReference type="STRING" id="330879.A4D9R2"/>
<dbReference type="EnsemblFungi" id="EBA27371">
    <property type="protein sequence ID" value="EBA27371"/>
    <property type="gene ID" value="AFUA_6G13940"/>
</dbReference>
<dbReference type="GeneID" id="5077233"/>
<dbReference type="KEGG" id="afm:AFUA_6G13940"/>
<dbReference type="eggNOG" id="KOG0156">
    <property type="taxonomic scope" value="Eukaryota"/>
</dbReference>
<dbReference type="HOGENOM" id="CLU_022195_0_3_1"/>
<dbReference type="InParanoid" id="A4D9R2"/>
<dbReference type="OMA" id="EHMGFGF"/>
<dbReference type="OrthoDB" id="1844152at2759"/>
<dbReference type="UniPathway" id="UPA00213"/>
<dbReference type="Proteomes" id="UP000002530">
    <property type="component" value="Chromosome 6"/>
</dbReference>
<dbReference type="GO" id="GO:0016020">
    <property type="term" value="C:membrane"/>
    <property type="evidence" value="ECO:0007669"/>
    <property type="project" value="UniProtKB-SubCell"/>
</dbReference>
<dbReference type="GO" id="GO:0020037">
    <property type="term" value="F:heme binding"/>
    <property type="evidence" value="ECO:0007669"/>
    <property type="project" value="InterPro"/>
</dbReference>
<dbReference type="GO" id="GO:0005506">
    <property type="term" value="F:iron ion binding"/>
    <property type="evidence" value="ECO:0007669"/>
    <property type="project" value="InterPro"/>
</dbReference>
<dbReference type="GO" id="GO:0004497">
    <property type="term" value="F:monooxygenase activity"/>
    <property type="evidence" value="ECO:0007669"/>
    <property type="project" value="UniProtKB-KW"/>
</dbReference>
<dbReference type="GO" id="GO:0016705">
    <property type="term" value="F:oxidoreductase activity, acting on paired donors, with incorporation or reduction of molecular oxygen"/>
    <property type="evidence" value="ECO:0007669"/>
    <property type="project" value="InterPro"/>
</dbReference>
<dbReference type="GO" id="GO:0019748">
    <property type="term" value="P:secondary metabolic process"/>
    <property type="evidence" value="ECO:0007669"/>
    <property type="project" value="UniProtKB-ARBA"/>
</dbReference>
<dbReference type="GO" id="GO:0016114">
    <property type="term" value="P:terpenoid biosynthetic process"/>
    <property type="evidence" value="ECO:0007669"/>
    <property type="project" value="UniProtKB-UniPathway"/>
</dbReference>
<dbReference type="CDD" id="cd11041">
    <property type="entry name" value="CYP503A1-like"/>
    <property type="match status" value="1"/>
</dbReference>
<dbReference type="Gene3D" id="1.10.630.10">
    <property type="entry name" value="Cytochrome P450"/>
    <property type="match status" value="1"/>
</dbReference>
<dbReference type="InterPro" id="IPR001128">
    <property type="entry name" value="Cyt_P450"/>
</dbReference>
<dbReference type="InterPro" id="IPR017972">
    <property type="entry name" value="Cyt_P450_CS"/>
</dbReference>
<dbReference type="InterPro" id="IPR002403">
    <property type="entry name" value="Cyt_P450_E_grp-IV"/>
</dbReference>
<dbReference type="InterPro" id="IPR036396">
    <property type="entry name" value="Cyt_P450_sf"/>
</dbReference>
<dbReference type="PANTHER" id="PTHR46206">
    <property type="entry name" value="CYTOCHROME P450"/>
    <property type="match status" value="1"/>
</dbReference>
<dbReference type="PANTHER" id="PTHR46206:SF10">
    <property type="entry name" value="CYTOCHROME P450 MONOOXYGENASE AUSI"/>
    <property type="match status" value="1"/>
</dbReference>
<dbReference type="Pfam" id="PF00067">
    <property type="entry name" value="p450"/>
    <property type="match status" value="1"/>
</dbReference>
<dbReference type="PRINTS" id="PR00465">
    <property type="entry name" value="EP450IV"/>
</dbReference>
<dbReference type="SUPFAM" id="SSF48264">
    <property type="entry name" value="Cytochrome P450"/>
    <property type="match status" value="1"/>
</dbReference>
<dbReference type="PROSITE" id="PS00086">
    <property type="entry name" value="CYTOCHROME_P450"/>
    <property type="match status" value="1"/>
</dbReference>
<keyword id="KW-0349">Heme</keyword>
<keyword id="KW-0408">Iron</keyword>
<keyword id="KW-0472">Membrane</keyword>
<keyword id="KW-0479">Metal-binding</keyword>
<keyword id="KW-0503">Monooxygenase</keyword>
<keyword id="KW-0560">Oxidoreductase</keyword>
<keyword id="KW-1185">Reference proteome</keyword>
<keyword id="KW-0812">Transmembrane</keyword>
<keyword id="KW-1133">Transmembrane helix</keyword>
<sequence length="518" mass="57847">MVSSFSSKRLGDTMDSLALGSNWAGGVAIVLFLAPLALHLVSSYLFPSTSTVINSGRAWDIFRTTAKKRFRSDAARLLQNGFEKSPDAFRILTDNGPLLVLSPRYAREVRSDDRLSLDHFIASEFHPDIPGFEPFKLILDPRNPLNTILKTSLTQALEDLSVEVADALSTALTDDSEWHEISPCQTALKLVAQMASKAFIGPEKCRDPKWHNVIITYTHNVYRAAQALHFWPKFLRPIVARFLPACQTLQAQIAEAREILEPLVAQRRADRACRAAQGKPVPSRADVIDWLEDSHGDQPYDPVAAQLLLSFAAIHGTSNLLAQALMDLCTAPDLIRDIRAEITSVLGDAGLTRAALYRLKLMDSALKESQRLAPNRLLSMGRIAQSDMHLSDGLRIPRGTTLMVSAHAMWEPQIYPDPRRYDGYRFYKLRQVPGQEGQHQLVSATEKHMGFGYGKHACPGRFFAAAEIKVALCHILLKYDLEHRGGGPPPRVWSQGIHLFPDPTARIRVRRRKEEISL</sequence>
<feature type="chain" id="PRO_0000436757" description="Cytochrome P450 monooxygenase pyr3">
    <location>
        <begin position="1"/>
        <end position="518"/>
    </location>
</feature>
<feature type="transmembrane region" description="Helical" evidence="2">
    <location>
        <begin position="26"/>
        <end position="46"/>
    </location>
</feature>
<feature type="binding site" description="axial binding residue" evidence="1">
    <location>
        <position position="458"/>
    </location>
    <ligand>
        <name>heme</name>
        <dbReference type="ChEBI" id="CHEBI:30413"/>
    </ligand>
    <ligandPart>
        <name>Fe</name>
        <dbReference type="ChEBI" id="CHEBI:18248"/>
    </ligandPart>
</feature>
<comment type="function">
    <text evidence="5 10 11">Cytochrome P450 monooxygenase; part of the gene cluster that mediates the biosynthesis of pyripyropene A, a specific human acyl-coenzyme A:cholesterol acyltransferase 2 inhibitor (PubMed:20861902). The first step of the pathway is the synthesis of nicotinyl-CoA from nicotinic acid by the nicotinic acid-CoA ligase pyr1 (PubMed:20861902). Nicotinyl-CoA is then a substrate of polyketide synthase pyr2 to produce 4-hydroxy-6-(3-pyridinyl)-2H-pyran-2-one (HPPO) which is further prenylated by the polyprenyl transferase pyr6 to yield farnesyl-HPPO (PubMed:20861902). The next steps consist of an epoxidation of farnesyl-HPPO to epoxyfarnesyl-HPPO by FAD-dependent monooxygenase pyr5 and a cyclization of the terpenoid portion by the terpene cyclase pyr4 to yield deacetyl-pyripyropene E (PubMed:20861902). The 2 cytochrome P450 monooxygenases pyr3 and pyr9, and the 2 acetyltransferases pyr7 and pyr8 are involved in the conversion of deacetyl-pyripyropene E into pyripyropene A through several cycles of oxidation and acetylation steps (PubMed:20861902). Pyr7 acetylates deacetyl-pyripyropene E to pyripyropene E which is oxidized to 11-deacetyl-pyripyropene O by pyr3, which is in turn acetylated into pyripyropene O by pyr8 (PubMed:21224862, PubMed:26019565). Pyripyropene O is then oxidized to deacetyl-pyripyropene A by pyr9 (PubMed:21224862). Deacetyl-pyripyropene A is finally acetylated to pyripyropene A by pyr8 (PubMed:26019565).</text>
</comment>
<comment type="cofactor">
    <cofactor evidence="1">
        <name>heme</name>
        <dbReference type="ChEBI" id="CHEBI:30413"/>
    </cofactor>
</comment>
<comment type="pathway">
    <text evidence="5">Secondary metabolite biosynthesis; terpenoid biosynthesis.</text>
</comment>
<comment type="subcellular location">
    <subcellularLocation>
        <location evidence="2">Membrane</location>
        <topology evidence="2">Single-pass membrane protein</topology>
    </subcellularLocation>
</comment>
<comment type="biotechnology">
    <text evidence="3 4 6">Pyripyropene A and its derivatives have very unique characteristics of selectively inhibiting the acyl-coenzyme A:cholesterol acyltransferase 2 (ACAT2) isozyme (PubMed:18997389). Therefore, pyripyropenes are expected to be developed as a new type of anti-atherosclerotic agent (PubMed:18997389). Furthermore, pyripyropenes have been shown to exhibit anti-angiogenic activity against human umbilical vein endothelial cells (PubMed:19571395). Finally, pyripyropene A also exhibits insecticidal properties (PubMed:8534106).</text>
</comment>
<comment type="similarity">
    <text evidence="8">Belongs to the cytochrome P450 family.</text>
</comment>
<organism>
    <name type="scientific">Aspergillus fumigatus (strain ATCC MYA-4609 / CBS 101355 / FGSC A1100 / Af293)</name>
    <name type="common">Neosartorya fumigata</name>
    <dbReference type="NCBI Taxonomy" id="330879"/>
    <lineage>
        <taxon>Eukaryota</taxon>
        <taxon>Fungi</taxon>
        <taxon>Dikarya</taxon>
        <taxon>Ascomycota</taxon>
        <taxon>Pezizomycotina</taxon>
        <taxon>Eurotiomycetes</taxon>
        <taxon>Eurotiomycetidae</taxon>
        <taxon>Eurotiales</taxon>
        <taxon>Aspergillaceae</taxon>
        <taxon>Aspergillus</taxon>
        <taxon>Aspergillus subgen. Fumigati</taxon>
    </lineage>
</organism>
<reference key="1">
    <citation type="journal article" date="2005" name="Nature">
        <title>Genomic sequence of the pathogenic and allergenic filamentous fungus Aspergillus fumigatus.</title>
        <authorList>
            <person name="Nierman W.C."/>
            <person name="Pain A."/>
            <person name="Anderson M.J."/>
            <person name="Wortman J.R."/>
            <person name="Kim H.S."/>
            <person name="Arroyo J."/>
            <person name="Berriman M."/>
            <person name="Abe K."/>
            <person name="Archer D.B."/>
            <person name="Bermejo C."/>
            <person name="Bennett J.W."/>
            <person name="Bowyer P."/>
            <person name="Chen D."/>
            <person name="Collins M."/>
            <person name="Coulsen R."/>
            <person name="Davies R."/>
            <person name="Dyer P.S."/>
            <person name="Farman M.L."/>
            <person name="Fedorova N."/>
            <person name="Fedorova N.D."/>
            <person name="Feldblyum T.V."/>
            <person name="Fischer R."/>
            <person name="Fosker N."/>
            <person name="Fraser A."/>
            <person name="Garcia J.L."/>
            <person name="Garcia M.J."/>
            <person name="Goble A."/>
            <person name="Goldman G.H."/>
            <person name="Gomi K."/>
            <person name="Griffith-Jones S."/>
            <person name="Gwilliam R."/>
            <person name="Haas B.J."/>
            <person name="Haas H."/>
            <person name="Harris D.E."/>
            <person name="Horiuchi H."/>
            <person name="Huang J."/>
            <person name="Humphray S."/>
            <person name="Jimenez J."/>
            <person name="Keller N."/>
            <person name="Khouri H."/>
            <person name="Kitamoto K."/>
            <person name="Kobayashi T."/>
            <person name="Konzack S."/>
            <person name="Kulkarni R."/>
            <person name="Kumagai T."/>
            <person name="Lafton A."/>
            <person name="Latge J.-P."/>
            <person name="Li W."/>
            <person name="Lord A."/>
            <person name="Lu C."/>
            <person name="Majoros W.H."/>
            <person name="May G.S."/>
            <person name="Miller B.L."/>
            <person name="Mohamoud Y."/>
            <person name="Molina M."/>
            <person name="Monod M."/>
            <person name="Mouyna I."/>
            <person name="Mulligan S."/>
            <person name="Murphy L.D."/>
            <person name="O'Neil S."/>
            <person name="Paulsen I."/>
            <person name="Penalva M.A."/>
            <person name="Pertea M."/>
            <person name="Price C."/>
            <person name="Pritchard B.L."/>
            <person name="Quail M.A."/>
            <person name="Rabbinowitsch E."/>
            <person name="Rawlins N."/>
            <person name="Rajandream M.A."/>
            <person name="Reichard U."/>
            <person name="Renauld H."/>
            <person name="Robson G.D."/>
            <person name="Rodriguez de Cordoba S."/>
            <person name="Rodriguez-Pena J.M."/>
            <person name="Ronning C.M."/>
            <person name="Rutter S."/>
            <person name="Salzberg S.L."/>
            <person name="Sanchez M."/>
            <person name="Sanchez-Ferrero J.C."/>
            <person name="Saunders D."/>
            <person name="Seeger K."/>
            <person name="Squares R."/>
            <person name="Squares S."/>
            <person name="Takeuchi M."/>
            <person name="Tekaia F."/>
            <person name="Turner G."/>
            <person name="Vazquez de Aldana C.R."/>
            <person name="Weidman J."/>
            <person name="White O."/>
            <person name="Woodward J.R."/>
            <person name="Yu J.-H."/>
            <person name="Fraser C.M."/>
            <person name="Galagan J.E."/>
            <person name="Asai K."/>
            <person name="Machida M."/>
            <person name="Hall N."/>
            <person name="Barrell B.G."/>
            <person name="Denning D.W."/>
        </authorList>
    </citation>
    <scope>NUCLEOTIDE SEQUENCE [LARGE SCALE GENOMIC DNA]</scope>
    <source>
        <strain>ATCC MYA-4609 / CBS 101355 / FGSC A1100 / Af293</strain>
    </source>
</reference>
<reference key="2">
    <citation type="journal article" date="1995" name="Appl. Environ. Microbiol.">
        <title>Aflavinines and other antiinsectan metabolites from the ascostromata of Eupenicillium crustaceum and related species.</title>
        <authorList>
            <person name="Wang H.J."/>
            <person name="Gloer J.B."/>
            <person name="Wicklow D.T."/>
            <person name="Dowd P.F."/>
        </authorList>
    </citation>
    <scope>BIOTECHNOLOGY</scope>
</reference>
<reference key="3">
    <citation type="journal article" date="2008" name="J. Antibiot.">
        <title>Selectivity of pyripyropene derivatives in inhibition toward acyl-CoA:cholesterol acyltransferase 2 isozyme.</title>
        <authorList>
            <person name="Ohshiro T."/>
            <person name="Ohte S."/>
            <person name="Matsuda D."/>
            <person name="Ohtawa M."/>
            <person name="Nagamitsu T."/>
            <person name="Sunazuka T."/>
            <person name="Harigaya Y."/>
            <person name="Rudel L.L."/>
            <person name="Omura S."/>
            <person name="Tomoda H."/>
        </authorList>
    </citation>
    <scope>BIOTECHNOLOGY</scope>
</reference>
<reference key="4">
    <citation type="journal article" date="2009" name="Biol. Pharm. Bull.">
        <title>Pyripyropenes, fungal sesquiterpenes conjugated with alpha-pyrone and pyridine moieties, exhibits anti-angiogenic activity against human umbilical vein endothelial cells.</title>
        <authorList>
            <person name="Hayashi A."/>
            <person name="Arai M."/>
            <person name="Fujita M."/>
            <person name="Kobayashi M."/>
        </authorList>
    </citation>
    <scope>BIOTECHNOLOGY</scope>
</reference>
<reference key="5">
    <citation type="journal article" date="2010" name="Nat. Chem.">
        <title>Reconstitution of a fungal meroterpenoid biosynthesis reveals the involvement of a novel family of terpene cyclases.</title>
        <authorList>
            <person name="Itoh T."/>
            <person name="Tokunaga K."/>
            <person name="Matsuda Y."/>
            <person name="Fujii I."/>
            <person name="Abe I."/>
            <person name="Ebizuka Y."/>
            <person name="Kushiro T."/>
        </authorList>
    </citation>
    <scope>FUNCTION</scope>
    <scope>CATALYTIC ACTIVITY</scope>
</reference>
<reference key="6">
    <citation type="journal article" date="2011" name="J. Antibiot.">
        <title>Characterization of two cytochrome P450 monooxygenase genes of the pyripyropene biosynthetic gene cluster from Penicillium coprobium.</title>
        <authorList>
            <person name="Hu J."/>
            <person name="Okawa H."/>
            <person name="Yamamoto K."/>
            <person name="Oyama K."/>
            <person name="Mitomi M."/>
            <person name="Anzai H."/>
        </authorList>
    </citation>
    <scope>FUNCTION</scope>
</reference>
<reference key="7">
    <citation type="journal article" date="2014" name="Biotechnol. Biotechnol. Equip.">
        <title>Characterization of two acetyltransferase genes in the pyripyropene biosynthetic gene cluster from Penicillium coprobium.</title>
        <authorList>
            <person name="Hu J."/>
            <person name="Furutani A."/>
            <person name="Yamamoto K."/>
            <person name="Oyama K."/>
            <person name="Mitomi M."/>
            <person name="Anzai H."/>
        </authorList>
    </citation>
    <scope>FUNCTION</scope>
</reference>
<proteinExistence type="evidence at protein level"/>